<organism>
    <name type="scientific">Bradyrhizobium diazoefficiens (strain JCM 10833 / BCRC 13528 / IAM 13628 / NBRC 14792 / USDA 110)</name>
    <dbReference type="NCBI Taxonomy" id="224911"/>
    <lineage>
        <taxon>Bacteria</taxon>
        <taxon>Pseudomonadati</taxon>
        <taxon>Pseudomonadota</taxon>
        <taxon>Alphaproteobacteria</taxon>
        <taxon>Hyphomicrobiales</taxon>
        <taxon>Nitrobacteraceae</taxon>
        <taxon>Bradyrhizobium</taxon>
    </lineage>
</organism>
<reference key="1">
    <citation type="journal article" date="1993" name="EMBO J.">
        <title>One member of a gro-ESL-like chaperonin multigene family in Bradyrhizobium japonicum is co-regulated with symbiotic nitrogen fixation genes.</title>
        <authorList>
            <person name="Fischer H.-M."/>
            <person name="Babst M."/>
            <person name="Kaspar T."/>
            <person name="Acuna G."/>
            <person name="Arigoni F."/>
            <person name="Hennecke H."/>
        </authorList>
    </citation>
    <scope>NUCLEOTIDE SEQUENCE [GENOMIC DNA]</scope>
    <source>
        <strain>USDA 110spc4</strain>
    </source>
</reference>
<reference key="2">
    <citation type="journal article" date="2002" name="DNA Res.">
        <title>Complete genomic sequence of nitrogen-fixing symbiotic bacterium Bradyrhizobium japonicum USDA110.</title>
        <authorList>
            <person name="Kaneko T."/>
            <person name="Nakamura Y."/>
            <person name="Sato S."/>
            <person name="Minamisawa K."/>
            <person name="Uchiumi T."/>
            <person name="Sasamoto S."/>
            <person name="Watanabe A."/>
            <person name="Idesawa K."/>
            <person name="Iriguchi M."/>
            <person name="Kawashima K."/>
            <person name="Kohara M."/>
            <person name="Matsumoto M."/>
            <person name="Shimpo S."/>
            <person name="Tsuruoka H."/>
            <person name="Wada T."/>
            <person name="Yamada M."/>
            <person name="Tabata S."/>
        </authorList>
    </citation>
    <scope>NUCLEOTIDE SEQUENCE [LARGE SCALE GENOMIC DNA]</scope>
    <source>
        <strain>JCM 10833 / BCRC 13528 / IAM 13628 / NBRC 14792 / USDA 110</strain>
    </source>
</reference>
<proteinExistence type="evidence at transcript level"/>
<dbReference type="EMBL" id="Z22604">
    <property type="protein sequence ID" value="CAA80317.1"/>
    <property type="molecule type" value="Genomic_DNA"/>
</dbReference>
<dbReference type="EMBL" id="BA000040">
    <property type="protein sequence ID" value="BAC52243.1"/>
    <property type="molecule type" value="Genomic_DNA"/>
</dbReference>
<dbReference type="PIR" id="S35308">
    <property type="entry name" value="S35308"/>
</dbReference>
<dbReference type="RefSeq" id="NP_773618.1">
    <property type="nucleotide sequence ID" value="NC_004463.1"/>
</dbReference>
<dbReference type="RefSeq" id="WP_011089716.1">
    <property type="nucleotide sequence ID" value="NC_004463.1"/>
</dbReference>
<dbReference type="SMR" id="P35863"/>
<dbReference type="FunCoup" id="P35863">
    <property type="interactions" value="715"/>
</dbReference>
<dbReference type="STRING" id="224911.AAV28_32480"/>
<dbReference type="EnsemblBacteria" id="BAC52243">
    <property type="protein sequence ID" value="BAC52243"/>
    <property type="gene ID" value="BAC52243"/>
</dbReference>
<dbReference type="GeneID" id="46493942"/>
<dbReference type="KEGG" id="bja:blr6978"/>
<dbReference type="PATRIC" id="fig|224911.44.peg.7012"/>
<dbReference type="eggNOG" id="COG0234">
    <property type="taxonomic scope" value="Bacteria"/>
</dbReference>
<dbReference type="HOGENOM" id="CLU_132825_1_0_5"/>
<dbReference type="InParanoid" id="P35863"/>
<dbReference type="OrthoDB" id="9806791at2"/>
<dbReference type="PhylomeDB" id="P35863"/>
<dbReference type="Proteomes" id="UP000002526">
    <property type="component" value="Chromosome"/>
</dbReference>
<dbReference type="GO" id="GO:0005737">
    <property type="term" value="C:cytoplasm"/>
    <property type="evidence" value="ECO:0007669"/>
    <property type="project" value="UniProtKB-SubCell"/>
</dbReference>
<dbReference type="GO" id="GO:0005524">
    <property type="term" value="F:ATP binding"/>
    <property type="evidence" value="ECO:0007669"/>
    <property type="project" value="InterPro"/>
</dbReference>
<dbReference type="GO" id="GO:0046872">
    <property type="term" value="F:metal ion binding"/>
    <property type="evidence" value="ECO:0000318"/>
    <property type="project" value="GO_Central"/>
</dbReference>
<dbReference type="GO" id="GO:0044183">
    <property type="term" value="F:protein folding chaperone"/>
    <property type="evidence" value="ECO:0007669"/>
    <property type="project" value="InterPro"/>
</dbReference>
<dbReference type="GO" id="GO:0051087">
    <property type="term" value="F:protein-folding chaperone binding"/>
    <property type="evidence" value="ECO:0000318"/>
    <property type="project" value="GO_Central"/>
</dbReference>
<dbReference type="GO" id="GO:0051082">
    <property type="term" value="F:unfolded protein binding"/>
    <property type="evidence" value="ECO:0000318"/>
    <property type="project" value="GO_Central"/>
</dbReference>
<dbReference type="GO" id="GO:0051085">
    <property type="term" value="P:chaperone cofactor-dependent protein refolding"/>
    <property type="evidence" value="ECO:0000318"/>
    <property type="project" value="GO_Central"/>
</dbReference>
<dbReference type="CDD" id="cd00320">
    <property type="entry name" value="cpn10"/>
    <property type="match status" value="1"/>
</dbReference>
<dbReference type="FunFam" id="2.30.33.40:FF:000001">
    <property type="entry name" value="10 kDa chaperonin"/>
    <property type="match status" value="1"/>
</dbReference>
<dbReference type="Gene3D" id="2.30.33.40">
    <property type="entry name" value="GroES chaperonin"/>
    <property type="match status" value="1"/>
</dbReference>
<dbReference type="HAMAP" id="MF_00580">
    <property type="entry name" value="CH10"/>
    <property type="match status" value="1"/>
</dbReference>
<dbReference type="InterPro" id="IPR020818">
    <property type="entry name" value="Chaperonin_GroES"/>
</dbReference>
<dbReference type="InterPro" id="IPR037124">
    <property type="entry name" value="Chaperonin_GroES_sf"/>
</dbReference>
<dbReference type="InterPro" id="IPR018369">
    <property type="entry name" value="Chaprnonin_Cpn10_CS"/>
</dbReference>
<dbReference type="InterPro" id="IPR011032">
    <property type="entry name" value="GroES-like_sf"/>
</dbReference>
<dbReference type="NCBIfam" id="NF001527">
    <property type="entry name" value="PRK00364.1-2"/>
    <property type="match status" value="1"/>
</dbReference>
<dbReference type="NCBIfam" id="NF001529">
    <property type="entry name" value="PRK00364.1-5"/>
    <property type="match status" value="1"/>
</dbReference>
<dbReference type="NCBIfam" id="NF001531">
    <property type="entry name" value="PRK00364.2-2"/>
    <property type="match status" value="1"/>
</dbReference>
<dbReference type="NCBIfam" id="NF001533">
    <property type="entry name" value="PRK00364.2-4"/>
    <property type="match status" value="1"/>
</dbReference>
<dbReference type="PANTHER" id="PTHR10772">
    <property type="entry name" value="10 KDA HEAT SHOCK PROTEIN"/>
    <property type="match status" value="1"/>
</dbReference>
<dbReference type="PANTHER" id="PTHR10772:SF58">
    <property type="entry name" value="CO-CHAPERONIN GROES"/>
    <property type="match status" value="1"/>
</dbReference>
<dbReference type="Pfam" id="PF00166">
    <property type="entry name" value="Cpn10"/>
    <property type="match status" value="1"/>
</dbReference>
<dbReference type="PRINTS" id="PR00297">
    <property type="entry name" value="CHAPERONIN10"/>
</dbReference>
<dbReference type="SMART" id="SM00883">
    <property type="entry name" value="Cpn10"/>
    <property type="match status" value="1"/>
</dbReference>
<dbReference type="SUPFAM" id="SSF50129">
    <property type="entry name" value="GroES-like"/>
    <property type="match status" value="1"/>
</dbReference>
<dbReference type="PROSITE" id="PS00681">
    <property type="entry name" value="CHAPERONINS_CPN10"/>
    <property type="match status" value="1"/>
</dbReference>
<comment type="function">
    <text evidence="1">Together with the chaperonin GroEL, plays an essential role in assisting protein folding. The GroEL-GroES system forms a nano-cage that allows encapsulation of the non-native substrate proteins and provides a physical environment optimized to promote and accelerate protein folding. GroES binds to the apical surface of the GroEL ring, thereby capping the opening of the GroEL channel.</text>
</comment>
<comment type="subunit">
    <text evidence="1">Heptamer of 7 subunits arranged in a ring. Interacts with the chaperonin GroEL.</text>
</comment>
<comment type="subcellular location">
    <subcellularLocation>
        <location evidence="1">Cytoplasm</location>
    </subcellularLocation>
</comment>
<comment type="induction">
    <text>Not induced by heat shock.</text>
</comment>
<comment type="similarity">
    <text evidence="1 2">Belongs to the GroES chaperonin family.</text>
</comment>
<accession>P35863</accession>
<name>CH102_BRADU</name>
<feature type="chain" id="PRO_0000174706" description="Co-chaperonin GroES 2">
    <location>
        <begin position="1"/>
        <end position="104"/>
    </location>
</feature>
<gene>
    <name evidence="1" type="primary">groES2</name>
    <name evidence="1" type="synonym">groS2</name>
    <name type="ordered locus">blr6978</name>
</gene>
<protein>
    <recommendedName>
        <fullName evidence="1">Co-chaperonin GroES 2</fullName>
    </recommendedName>
    <alternativeName>
        <fullName evidence="1">10 kDa chaperonin 2</fullName>
    </alternativeName>
    <alternativeName>
        <fullName evidence="1">Chaperonin-10 2</fullName>
        <shortName evidence="1">Cpn10 2</shortName>
    </alternativeName>
</protein>
<evidence type="ECO:0000255" key="1">
    <source>
        <dbReference type="HAMAP-Rule" id="MF_00580"/>
    </source>
</evidence>
<evidence type="ECO:0000305" key="2"/>
<sequence length="104" mass="11296">MKFRPLHDRVVVKRIDAEEKTAGGIIIPDTVKEKPSQGEVIAVGPGGRDESGKLIPIDVRVGDRVLFGKWSGTEVKIDTQELLIMKESDIMGVLADVSSKKKAA</sequence>
<keyword id="KW-0143">Chaperone</keyword>
<keyword id="KW-0963">Cytoplasm</keyword>
<keyword id="KW-1185">Reference proteome</keyword>